<comment type="function">
    <text evidence="1">N-acetylglutamate synthase involved in arginine biosynthesis.</text>
</comment>
<comment type="catalytic activity">
    <reaction>
        <text>L-glutamate + acetyl-CoA = N-acetyl-L-glutamate + CoA + H(+)</text>
        <dbReference type="Rhea" id="RHEA:24292"/>
        <dbReference type="ChEBI" id="CHEBI:15378"/>
        <dbReference type="ChEBI" id="CHEBI:29985"/>
        <dbReference type="ChEBI" id="CHEBI:44337"/>
        <dbReference type="ChEBI" id="CHEBI:57287"/>
        <dbReference type="ChEBI" id="CHEBI:57288"/>
        <dbReference type="EC" id="2.3.1.1"/>
    </reaction>
</comment>
<comment type="pathway">
    <text>Amino-acid biosynthesis; L-arginine biosynthesis; N(2)-acetyl-L-ornithine from L-glutamate: step 1/4.</text>
</comment>
<comment type="subcellular location">
    <subcellularLocation>
        <location evidence="1">Mitochondrion</location>
    </subcellularLocation>
</comment>
<comment type="similarity">
    <text evidence="5">Belongs to the acetyltransferase family.</text>
</comment>
<reference key="1">
    <citation type="journal article" date="2015" name="Genome Announc.">
        <title>Genome sequence of Aspergillus flavus NRRL 3357, a strain that causes aflatoxin contamination of food and feed.</title>
        <authorList>
            <person name="Nierman W.C."/>
            <person name="Yu J."/>
            <person name="Fedorova-Abrams N.D."/>
            <person name="Losada L."/>
            <person name="Cleveland T.E."/>
            <person name="Bhatnagar D."/>
            <person name="Bennett J.W."/>
            <person name="Dean R."/>
            <person name="Payne G.A."/>
        </authorList>
    </citation>
    <scope>NUCLEOTIDE SEQUENCE [LARGE SCALE GENOMIC DNA]</scope>
    <source>
        <strain>ATCC 200026 / FGSC A1120 / IAM 13836 / NRRL 3357 / JCM 12722 / SRRC 167</strain>
    </source>
</reference>
<name>NAGS_ASPFN</name>
<keyword id="KW-0012">Acyltransferase</keyword>
<keyword id="KW-0028">Amino-acid biosynthesis</keyword>
<keyword id="KW-0496">Mitochondrion</keyword>
<keyword id="KW-0808">Transferase</keyword>
<keyword id="KW-0809">Transit peptide</keyword>
<organism>
    <name type="scientific">Aspergillus flavus (strain ATCC 200026 / FGSC A1120 / IAM 13836 / NRRL 3357 / JCM 12722 / SRRC 167)</name>
    <dbReference type="NCBI Taxonomy" id="332952"/>
    <lineage>
        <taxon>Eukaryota</taxon>
        <taxon>Fungi</taxon>
        <taxon>Dikarya</taxon>
        <taxon>Ascomycota</taxon>
        <taxon>Pezizomycotina</taxon>
        <taxon>Eurotiomycetes</taxon>
        <taxon>Eurotiomycetidae</taxon>
        <taxon>Eurotiales</taxon>
        <taxon>Aspergillaceae</taxon>
        <taxon>Aspergillus</taxon>
        <taxon>Aspergillus subgen. Circumdati</taxon>
    </lineage>
</organism>
<proteinExistence type="inferred from homology"/>
<protein>
    <recommendedName>
        <fullName>Amino-acid acetyltransferase, mitochondrial</fullName>
        <ecNumber>2.3.1.1</ecNumber>
    </recommendedName>
    <alternativeName>
        <fullName>Arginine-requiring protein 2</fullName>
    </alternativeName>
    <alternativeName>
        <fullName>Glutamate N-acetyltransferase</fullName>
    </alternativeName>
    <alternativeName>
        <fullName>N-acetylglutamate synthase</fullName>
        <shortName>AGS</shortName>
        <shortName>NAGS</shortName>
    </alternativeName>
</protein>
<evidence type="ECO:0000250" key="1"/>
<evidence type="ECO:0000255" key="2"/>
<evidence type="ECO:0000255" key="3">
    <source>
        <dbReference type="PROSITE-ProRule" id="PRU00532"/>
    </source>
</evidence>
<evidence type="ECO:0000256" key="4">
    <source>
        <dbReference type="SAM" id="MobiDB-lite"/>
    </source>
</evidence>
<evidence type="ECO:0000305" key="5"/>
<dbReference type="EC" id="2.3.1.1"/>
<dbReference type="EMBL" id="EQ963478">
    <property type="protein sequence ID" value="EED50674.1"/>
    <property type="molecule type" value="Genomic_DNA"/>
</dbReference>
<dbReference type="RefSeq" id="XP_002379450.1">
    <property type="nucleotide sequence ID" value="XM_002379409.1"/>
</dbReference>
<dbReference type="SMR" id="B8NG97"/>
<dbReference type="STRING" id="332952.B8NG97"/>
<dbReference type="EnsemblFungi" id="EED50674">
    <property type="protein sequence ID" value="EED50674"/>
    <property type="gene ID" value="AFLA_134370"/>
</dbReference>
<dbReference type="VEuPathDB" id="FungiDB:AFLA_005780"/>
<dbReference type="eggNOG" id="KOG2436">
    <property type="taxonomic scope" value="Eukaryota"/>
</dbReference>
<dbReference type="HOGENOM" id="CLU_013088_0_0_1"/>
<dbReference type="OMA" id="NAMVRDC"/>
<dbReference type="UniPathway" id="UPA00068">
    <property type="reaction ID" value="UER00106"/>
</dbReference>
<dbReference type="GO" id="GO:0005759">
    <property type="term" value="C:mitochondrial matrix"/>
    <property type="evidence" value="ECO:0007669"/>
    <property type="project" value="TreeGrafter"/>
</dbReference>
<dbReference type="GO" id="GO:0004042">
    <property type="term" value="F:L-glutamate N-acetyltransferase activity"/>
    <property type="evidence" value="ECO:0007669"/>
    <property type="project" value="InterPro"/>
</dbReference>
<dbReference type="GO" id="GO:0006526">
    <property type="term" value="P:L-arginine biosynthetic process"/>
    <property type="evidence" value="ECO:0007669"/>
    <property type="project" value="UniProtKB-UniPathway"/>
</dbReference>
<dbReference type="GO" id="GO:0006592">
    <property type="term" value="P:ornithine biosynthetic process"/>
    <property type="evidence" value="ECO:0007669"/>
    <property type="project" value="TreeGrafter"/>
</dbReference>
<dbReference type="FunFam" id="3.40.630.30:FF:000049">
    <property type="entry name" value="Amino-acid acetyltransferase, mitochondrial"/>
    <property type="match status" value="1"/>
</dbReference>
<dbReference type="Gene3D" id="3.40.630.30">
    <property type="match status" value="1"/>
</dbReference>
<dbReference type="InterPro" id="IPR011190">
    <property type="entry name" value="GlcNAc_Synth_fun"/>
</dbReference>
<dbReference type="InterPro" id="IPR006855">
    <property type="entry name" value="Vertebrate-like_GNAT_dom"/>
</dbReference>
<dbReference type="PANTHER" id="PTHR23342:SF4">
    <property type="entry name" value="AMINO-ACID ACETYLTRANSFERASE, MITOCHONDRIAL"/>
    <property type="match status" value="1"/>
</dbReference>
<dbReference type="PANTHER" id="PTHR23342">
    <property type="entry name" value="N-ACETYLGLUTAMATE SYNTHASE"/>
    <property type="match status" value="1"/>
</dbReference>
<dbReference type="Pfam" id="PF04768">
    <property type="entry name" value="NAT"/>
    <property type="match status" value="1"/>
</dbReference>
<dbReference type="PIRSF" id="PIRSF007892">
    <property type="entry name" value="NAGS_fungal"/>
    <property type="match status" value="1"/>
</dbReference>
<dbReference type="PROSITE" id="PS51731">
    <property type="entry name" value="GNAT_NAGS"/>
    <property type="match status" value="1"/>
</dbReference>
<sequence>MSSRALTWPRTAKSSLLKQQTSSFVGQPKLGTPNCRSFSSTADRPINQSAEFSSSSKSYDRLGRRAKEKLLDREFFLSLLNSASTKREAKSYLARLKAQHPPKAQTEPTTGHSKGTVTQSLPSGVNLGSFYGASRSVYDSPVFRHDSTPLPPPSELPEERLHLALIKIRTPQLLDDTIINGVAKTLSQLSRLGMACCVVVDPGTAGNANTLRRVAAEQAERISIAVDAQPDSKSAHLDSVLSLSPMFPELPTVLSRKALLNPLRDGQIVVVAPIAYTEDVPKAVTISANDAILALTKELAGLAMRPDPDEDPWLTAQKIAKLQKEVSLDRVILLDPLGGIPSFRGPQTSHVFINMEQEFDDIKNELLHVQSSEACTATTPKGGNTFVEDPLERHLDNLQLSQNVLAMLPSASSGIITSPLEVSNSARTPQANPSDVSAVGTRRQRNPLIHNLLTDKPLLSSSLPMSRREAMNRRRGSINTPSSHTTFVKRGMPLTMIPNPRVEVWTAQNRPRLSLDDPSIDLPRLVQLIEDSFNRKLDVQDYLNRVNDRLAGLIIAGEYEGGAILTWELPPGVEDDGSPASEARMVPYLDKFAVLKRSQGAGGVADIVFNAMVRSCFPNGVCWRSRKDNPVNKWYFERSTGTWKLSDTNWTMFWTTPGLTENSQRFSDYEQVCRSIQPSWADDTGVVD</sequence>
<accession>B8NG97</accession>
<feature type="transit peptide" description="Mitochondrion" evidence="2">
    <location>
        <begin position="1"/>
        <end position="45"/>
    </location>
</feature>
<feature type="chain" id="PRO_0000372551" description="Amino-acid acetyltransferase, mitochondrial">
    <location>
        <begin position="46"/>
        <end position="688"/>
    </location>
</feature>
<feature type="domain" description="N-acetyltransferase" evidence="3">
    <location>
        <begin position="509"/>
        <end position="678"/>
    </location>
</feature>
<feature type="region of interest" description="Disordered" evidence="4">
    <location>
        <begin position="1"/>
        <end position="59"/>
    </location>
</feature>
<feature type="region of interest" description="Disordered" evidence="4">
    <location>
        <begin position="96"/>
        <end position="119"/>
    </location>
</feature>
<feature type="compositionally biased region" description="Polar residues" evidence="4">
    <location>
        <begin position="12"/>
        <end position="25"/>
    </location>
</feature>
<feature type="compositionally biased region" description="Polar residues" evidence="4">
    <location>
        <begin position="34"/>
        <end position="57"/>
    </location>
</feature>
<feature type="compositionally biased region" description="Polar residues" evidence="4">
    <location>
        <begin position="106"/>
        <end position="119"/>
    </location>
</feature>
<gene>
    <name type="primary">arg2</name>
    <name type="ORF">AFLA_134370</name>
</gene>